<name>YQGF_EHRCJ</name>
<feature type="chain" id="PRO_0000257531" description="Putative pre-16S rRNA nuclease">
    <location>
        <begin position="1"/>
        <end position="156"/>
    </location>
</feature>
<accession>Q3YRQ5</accession>
<protein>
    <recommendedName>
        <fullName evidence="1">Putative pre-16S rRNA nuclease</fullName>
        <ecNumber evidence="1">3.1.-.-</ecNumber>
    </recommendedName>
</protein>
<dbReference type="EC" id="3.1.-.-" evidence="1"/>
<dbReference type="EMBL" id="CP000107">
    <property type="protein sequence ID" value="AAZ68600.1"/>
    <property type="molecule type" value="Genomic_DNA"/>
</dbReference>
<dbReference type="RefSeq" id="WP_011304678.1">
    <property type="nucleotide sequence ID" value="NC_007354.1"/>
</dbReference>
<dbReference type="SMR" id="Q3YRQ5"/>
<dbReference type="FunCoup" id="Q3YRQ5">
    <property type="interactions" value="214"/>
</dbReference>
<dbReference type="STRING" id="269484.Ecaj_0565"/>
<dbReference type="KEGG" id="ecn:Ecaj_0565"/>
<dbReference type="eggNOG" id="COG0816">
    <property type="taxonomic scope" value="Bacteria"/>
</dbReference>
<dbReference type="HOGENOM" id="CLU_098240_2_2_5"/>
<dbReference type="InParanoid" id="Q3YRQ5"/>
<dbReference type="Proteomes" id="UP000000435">
    <property type="component" value="Chromosome"/>
</dbReference>
<dbReference type="GO" id="GO:0005829">
    <property type="term" value="C:cytosol"/>
    <property type="evidence" value="ECO:0007669"/>
    <property type="project" value="TreeGrafter"/>
</dbReference>
<dbReference type="GO" id="GO:0004518">
    <property type="term" value="F:nuclease activity"/>
    <property type="evidence" value="ECO:0007669"/>
    <property type="project" value="UniProtKB-KW"/>
</dbReference>
<dbReference type="GO" id="GO:0000967">
    <property type="term" value="P:rRNA 5'-end processing"/>
    <property type="evidence" value="ECO:0007669"/>
    <property type="project" value="UniProtKB-UniRule"/>
</dbReference>
<dbReference type="CDD" id="cd16964">
    <property type="entry name" value="YqgF"/>
    <property type="match status" value="1"/>
</dbReference>
<dbReference type="Gene3D" id="3.30.420.140">
    <property type="entry name" value="YqgF/RNase H-like domain"/>
    <property type="match status" value="1"/>
</dbReference>
<dbReference type="HAMAP" id="MF_00651">
    <property type="entry name" value="Nuclease_YqgF"/>
    <property type="match status" value="1"/>
</dbReference>
<dbReference type="InterPro" id="IPR012337">
    <property type="entry name" value="RNaseH-like_sf"/>
</dbReference>
<dbReference type="InterPro" id="IPR005227">
    <property type="entry name" value="YqgF"/>
</dbReference>
<dbReference type="InterPro" id="IPR006641">
    <property type="entry name" value="YqgF/RNaseH-like_dom"/>
</dbReference>
<dbReference type="InterPro" id="IPR037027">
    <property type="entry name" value="YqgF/RNaseH-like_dom_sf"/>
</dbReference>
<dbReference type="NCBIfam" id="TIGR00250">
    <property type="entry name" value="RNAse_H_YqgF"/>
    <property type="match status" value="1"/>
</dbReference>
<dbReference type="PANTHER" id="PTHR33317">
    <property type="entry name" value="POLYNUCLEOTIDYL TRANSFERASE, RIBONUCLEASE H-LIKE SUPERFAMILY PROTEIN"/>
    <property type="match status" value="1"/>
</dbReference>
<dbReference type="PANTHER" id="PTHR33317:SF4">
    <property type="entry name" value="POLYNUCLEOTIDYL TRANSFERASE, RIBONUCLEASE H-LIKE SUPERFAMILY PROTEIN"/>
    <property type="match status" value="1"/>
</dbReference>
<dbReference type="Pfam" id="PF03652">
    <property type="entry name" value="RuvX"/>
    <property type="match status" value="1"/>
</dbReference>
<dbReference type="SMART" id="SM00732">
    <property type="entry name" value="YqgFc"/>
    <property type="match status" value="1"/>
</dbReference>
<dbReference type="SUPFAM" id="SSF53098">
    <property type="entry name" value="Ribonuclease H-like"/>
    <property type="match status" value="1"/>
</dbReference>
<keyword id="KW-0963">Cytoplasm</keyword>
<keyword id="KW-0378">Hydrolase</keyword>
<keyword id="KW-0540">Nuclease</keyword>
<keyword id="KW-0690">Ribosome biogenesis</keyword>
<reference key="1">
    <citation type="journal article" date="2006" name="J. Bacteriol.">
        <title>The genome of the obligately intracellular bacterium Ehrlichia canis reveals themes of complex membrane structure and immune evasion strategies.</title>
        <authorList>
            <person name="Mavromatis K."/>
            <person name="Doyle C.K."/>
            <person name="Lykidis A."/>
            <person name="Ivanova N."/>
            <person name="Francino M.P."/>
            <person name="Chain P."/>
            <person name="Shin M."/>
            <person name="Malfatti S."/>
            <person name="Larimer F."/>
            <person name="Copeland A."/>
            <person name="Detter J.C."/>
            <person name="Land M."/>
            <person name="Richardson P.M."/>
            <person name="Yu X.J."/>
            <person name="Walker D.H."/>
            <person name="McBride J.W."/>
            <person name="Kyrpides N.C."/>
        </authorList>
    </citation>
    <scope>NUCLEOTIDE SEQUENCE [LARGE SCALE GENOMIC DNA]</scope>
    <source>
        <strain>Jake</strain>
    </source>
</reference>
<comment type="function">
    <text evidence="1">Could be a nuclease involved in processing of the 5'-end of pre-16S rRNA.</text>
</comment>
<comment type="subcellular location">
    <subcellularLocation>
        <location evidence="1">Cytoplasm</location>
    </subcellularLocation>
</comment>
<comment type="similarity">
    <text evidence="1">Belongs to the YqgF nuclease family.</text>
</comment>
<organism>
    <name type="scientific">Ehrlichia canis (strain Jake)</name>
    <dbReference type="NCBI Taxonomy" id="269484"/>
    <lineage>
        <taxon>Bacteria</taxon>
        <taxon>Pseudomonadati</taxon>
        <taxon>Pseudomonadota</taxon>
        <taxon>Alphaproteobacteria</taxon>
        <taxon>Rickettsiales</taxon>
        <taxon>Anaplasmataceae</taxon>
        <taxon>Ehrlichia</taxon>
    </lineage>
</organism>
<gene>
    <name type="ordered locus">Ecaj_0565</name>
</gene>
<proteinExistence type="inferred from homology"/>
<evidence type="ECO:0000255" key="1">
    <source>
        <dbReference type="HAMAP-Rule" id="MF_00651"/>
    </source>
</evidence>
<sequence>MLYKSIDEFVKVIDKKKRIIGLDFGEKKIGIALSDKTNLVAIPYSVYIKRSTRKDLGSLYNIFVENNVGSMVIGWPIELSGIESELCQKVVLLANRIIAKYKINIYLHDERYSTAMATRVAKLANIKRKESQSIDDKIAAMLILQQVLDIMKIYQI</sequence>